<accession>A5FGN3</accession>
<feature type="chain" id="PRO_0000341092" description="D-alanine--D-alanine ligase">
    <location>
        <begin position="1"/>
        <end position="323"/>
    </location>
</feature>
<feature type="domain" description="ATP-grasp" evidence="2">
    <location>
        <begin position="120"/>
        <end position="319"/>
    </location>
</feature>
<feature type="binding site" evidence="2">
    <location>
        <begin position="148"/>
        <end position="203"/>
    </location>
    <ligand>
        <name>ATP</name>
        <dbReference type="ChEBI" id="CHEBI:30616"/>
    </ligand>
</feature>
<feature type="binding site" evidence="2">
    <location>
        <position position="274"/>
    </location>
    <ligand>
        <name>Mg(2+)</name>
        <dbReference type="ChEBI" id="CHEBI:18420"/>
        <label>1</label>
    </ligand>
</feature>
<feature type="binding site" evidence="2">
    <location>
        <position position="286"/>
    </location>
    <ligand>
        <name>Mg(2+)</name>
        <dbReference type="ChEBI" id="CHEBI:18420"/>
        <label>1</label>
    </ligand>
</feature>
<feature type="binding site" evidence="2">
    <location>
        <position position="286"/>
    </location>
    <ligand>
        <name>Mg(2+)</name>
        <dbReference type="ChEBI" id="CHEBI:18420"/>
        <label>2</label>
    </ligand>
</feature>
<feature type="binding site" evidence="2">
    <location>
        <position position="288"/>
    </location>
    <ligand>
        <name>Mg(2+)</name>
        <dbReference type="ChEBI" id="CHEBI:18420"/>
        <label>2</label>
    </ligand>
</feature>
<gene>
    <name evidence="2" type="primary">ddl</name>
    <name type="ordered locus">Fjoh_2618</name>
</gene>
<name>DDL_FLAJ1</name>
<protein>
    <recommendedName>
        <fullName evidence="2">D-alanine--D-alanine ligase</fullName>
        <ecNumber evidence="2">6.3.2.4</ecNumber>
    </recommendedName>
    <alternativeName>
        <fullName evidence="2">D-Ala-D-Ala ligase</fullName>
    </alternativeName>
    <alternativeName>
        <fullName evidence="2">D-alanylalanine synthetase</fullName>
    </alternativeName>
</protein>
<keyword id="KW-0067">ATP-binding</keyword>
<keyword id="KW-0133">Cell shape</keyword>
<keyword id="KW-0961">Cell wall biogenesis/degradation</keyword>
<keyword id="KW-0963">Cytoplasm</keyword>
<keyword id="KW-0436">Ligase</keyword>
<keyword id="KW-0460">Magnesium</keyword>
<keyword id="KW-0464">Manganese</keyword>
<keyword id="KW-0479">Metal-binding</keyword>
<keyword id="KW-0547">Nucleotide-binding</keyword>
<keyword id="KW-0573">Peptidoglycan synthesis</keyword>
<proteinExistence type="inferred from homology"/>
<comment type="function">
    <text evidence="2">Cell wall formation.</text>
</comment>
<comment type="catalytic activity">
    <reaction evidence="2">
        <text>2 D-alanine + ATP = D-alanyl-D-alanine + ADP + phosphate + H(+)</text>
        <dbReference type="Rhea" id="RHEA:11224"/>
        <dbReference type="ChEBI" id="CHEBI:15378"/>
        <dbReference type="ChEBI" id="CHEBI:30616"/>
        <dbReference type="ChEBI" id="CHEBI:43474"/>
        <dbReference type="ChEBI" id="CHEBI:57416"/>
        <dbReference type="ChEBI" id="CHEBI:57822"/>
        <dbReference type="ChEBI" id="CHEBI:456216"/>
        <dbReference type="EC" id="6.3.2.4"/>
    </reaction>
</comment>
<comment type="cofactor">
    <cofactor evidence="1">
        <name>Mg(2+)</name>
        <dbReference type="ChEBI" id="CHEBI:18420"/>
    </cofactor>
    <cofactor evidence="1">
        <name>Mn(2+)</name>
        <dbReference type="ChEBI" id="CHEBI:29035"/>
    </cofactor>
    <text evidence="1">Binds 2 magnesium or manganese ions per subunit.</text>
</comment>
<comment type="pathway">
    <text evidence="2">Cell wall biogenesis; peptidoglycan biosynthesis.</text>
</comment>
<comment type="subcellular location">
    <subcellularLocation>
        <location evidence="2">Cytoplasm</location>
    </subcellularLocation>
</comment>
<comment type="similarity">
    <text evidence="2">Belongs to the D-alanine--D-alanine ligase family.</text>
</comment>
<organism>
    <name type="scientific">Flavobacterium johnsoniae (strain ATCC 17061 / DSM 2064 / JCM 8514 / BCRC 14874 / CCUG 350202 / NBRC 14942 / NCIMB 11054 / UW101)</name>
    <name type="common">Cytophaga johnsonae</name>
    <dbReference type="NCBI Taxonomy" id="376686"/>
    <lineage>
        <taxon>Bacteria</taxon>
        <taxon>Pseudomonadati</taxon>
        <taxon>Bacteroidota</taxon>
        <taxon>Flavobacteriia</taxon>
        <taxon>Flavobacteriales</taxon>
        <taxon>Flavobacteriaceae</taxon>
        <taxon>Flavobacterium</taxon>
    </lineage>
</organism>
<reference key="1">
    <citation type="journal article" date="2009" name="Appl. Environ. Microbiol.">
        <title>Novel features of the polysaccharide-digesting gliding bacterium Flavobacterium johnsoniae as revealed by genome sequence analysis.</title>
        <authorList>
            <person name="McBride M.J."/>
            <person name="Xie G."/>
            <person name="Martens E.C."/>
            <person name="Lapidus A."/>
            <person name="Henrissat B."/>
            <person name="Rhodes R.G."/>
            <person name="Goltsman E."/>
            <person name="Wang W."/>
            <person name="Xu J."/>
            <person name="Hunnicutt D.W."/>
            <person name="Staroscik A.M."/>
            <person name="Hoover T.R."/>
            <person name="Cheng Y.Q."/>
            <person name="Stein J.L."/>
        </authorList>
    </citation>
    <scope>NUCLEOTIDE SEQUENCE [LARGE SCALE GENOMIC DNA]</scope>
    <source>
        <strain>ATCC 17061 / DSM 2064 / JCM 8514 / BCRC 14874 / CCUG 350202 / NBRC 14942 / NCIMB 11054 / UW101</strain>
    </source>
</reference>
<dbReference type="EC" id="6.3.2.4" evidence="2"/>
<dbReference type="EMBL" id="CP000685">
    <property type="protein sequence ID" value="ABQ05645.1"/>
    <property type="molecule type" value="Genomic_DNA"/>
</dbReference>
<dbReference type="RefSeq" id="WP_012024684.1">
    <property type="nucleotide sequence ID" value="NZ_MUGZ01000009.1"/>
</dbReference>
<dbReference type="SMR" id="A5FGN3"/>
<dbReference type="STRING" id="376686.Fjoh_2618"/>
<dbReference type="KEGG" id="fjo:Fjoh_2618"/>
<dbReference type="eggNOG" id="COG1181">
    <property type="taxonomic scope" value="Bacteria"/>
</dbReference>
<dbReference type="HOGENOM" id="CLU_039268_1_1_10"/>
<dbReference type="OrthoDB" id="9813261at2"/>
<dbReference type="UniPathway" id="UPA00219"/>
<dbReference type="Proteomes" id="UP000006694">
    <property type="component" value="Chromosome"/>
</dbReference>
<dbReference type="GO" id="GO:0005737">
    <property type="term" value="C:cytoplasm"/>
    <property type="evidence" value="ECO:0007669"/>
    <property type="project" value="UniProtKB-SubCell"/>
</dbReference>
<dbReference type="GO" id="GO:0005524">
    <property type="term" value="F:ATP binding"/>
    <property type="evidence" value="ECO:0007669"/>
    <property type="project" value="UniProtKB-KW"/>
</dbReference>
<dbReference type="GO" id="GO:0008716">
    <property type="term" value="F:D-alanine-D-alanine ligase activity"/>
    <property type="evidence" value="ECO:0007669"/>
    <property type="project" value="UniProtKB-UniRule"/>
</dbReference>
<dbReference type="GO" id="GO:0046872">
    <property type="term" value="F:metal ion binding"/>
    <property type="evidence" value="ECO:0007669"/>
    <property type="project" value="UniProtKB-KW"/>
</dbReference>
<dbReference type="GO" id="GO:0071555">
    <property type="term" value="P:cell wall organization"/>
    <property type="evidence" value="ECO:0007669"/>
    <property type="project" value="UniProtKB-KW"/>
</dbReference>
<dbReference type="GO" id="GO:0009252">
    <property type="term" value="P:peptidoglycan biosynthetic process"/>
    <property type="evidence" value="ECO:0007669"/>
    <property type="project" value="UniProtKB-UniRule"/>
</dbReference>
<dbReference type="GO" id="GO:0008360">
    <property type="term" value="P:regulation of cell shape"/>
    <property type="evidence" value="ECO:0007669"/>
    <property type="project" value="UniProtKB-KW"/>
</dbReference>
<dbReference type="Gene3D" id="3.40.50.20">
    <property type="match status" value="1"/>
</dbReference>
<dbReference type="Gene3D" id="3.30.1490.20">
    <property type="entry name" value="ATP-grasp fold, A domain"/>
    <property type="match status" value="1"/>
</dbReference>
<dbReference type="Gene3D" id="3.30.470.20">
    <property type="entry name" value="ATP-grasp fold, B domain"/>
    <property type="match status" value="1"/>
</dbReference>
<dbReference type="HAMAP" id="MF_00047">
    <property type="entry name" value="Dala_Dala_lig"/>
    <property type="match status" value="1"/>
</dbReference>
<dbReference type="InterPro" id="IPR011761">
    <property type="entry name" value="ATP-grasp"/>
</dbReference>
<dbReference type="InterPro" id="IPR013815">
    <property type="entry name" value="ATP_grasp_subdomain_1"/>
</dbReference>
<dbReference type="InterPro" id="IPR000291">
    <property type="entry name" value="D-Ala_lig_Van_CS"/>
</dbReference>
<dbReference type="InterPro" id="IPR005905">
    <property type="entry name" value="D_ala_D_ala"/>
</dbReference>
<dbReference type="InterPro" id="IPR011095">
    <property type="entry name" value="Dala_Dala_lig_C"/>
</dbReference>
<dbReference type="InterPro" id="IPR011127">
    <property type="entry name" value="Dala_Dala_lig_N"/>
</dbReference>
<dbReference type="InterPro" id="IPR016185">
    <property type="entry name" value="PreATP-grasp_dom_sf"/>
</dbReference>
<dbReference type="NCBIfam" id="TIGR01205">
    <property type="entry name" value="D_ala_D_alaTIGR"/>
    <property type="match status" value="1"/>
</dbReference>
<dbReference type="NCBIfam" id="NF002378">
    <property type="entry name" value="PRK01372.1"/>
    <property type="match status" value="1"/>
</dbReference>
<dbReference type="NCBIfam" id="NF002527">
    <property type="entry name" value="PRK01966.1-3"/>
    <property type="match status" value="1"/>
</dbReference>
<dbReference type="PANTHER" id="PTHR23132">
    <property type="entry name" value="D-ALANINE--D-ALANINE LIGASE"/>
    <property type="match status" value="1"/>
</dbReference>
<dbReference type="PANTHER" id="PTHR23132:SF23">
    <property type="entry name" value="D-ALANINE--D-ALANINE LIGASE B"/>
    <property type="match status" value="1"/>
</dbReference>
<dbReference type="Pfam" id="PF07478">
    <property type="entry name" value="Dala_Dala_lig_C"/>
    <property type="match status" value="1"/>
</dbReference>
<dbReference type="Pfam" id="PF01820">
    <property type="entry name" value="Dala_Dala_lig_N"/>
    <property type="match status" value="1"/>
</dbReference>
<dbReference type="PIRSF" id="PIRSF039102">
    <property type="entry name" value="Ddl/VanB"/>
    <property type="match status" value="1"/>
</dbReference>
<dbReference type="SUPFAM" id="SSF56059">
    <property type="entry name" value="Glutathione synthetase ATP-binding domain-like"/>
    <property type="match status" value="1"/>
</dbReference>
<dbReference type="SUPFAM" id="SSF52440">
    <property type="entry name" value="PreATP-grasp domain"/>
    <property type="match status" value="1"/>
</dbReference>
<dbReference type="PROSITE" id="PS50975">
    <property type="entry name" value="ATP_GRASP"/>
    <property type="match status" value="1"/>
</dbReference>
<dbReference type="PROSITE" id="PS00843">
    <property type="entry name" value="DALA_DALA_LIGASE_1"/>
    <property type="match status" value="1"/>
</dbReference>
<sequence>MKNIAIIMGGYSSEYKISLISGNVVYQYLDKTKYNGFRIHIFKEKWVYVDANDAEFPIDRNDFSVTVNGEKITFDCVFNAIHGTPGEDGLMQAYFELIGLPQSSCDYYQSALTFNKRDLLSVLKPYGIKTAISYYLNKGDEINTAEIVKKVGLPCFVKPNKAGSSFGISKVKSEAELPIAIEVAYKEDNEIIIESFLDGTEVSVGVINYKGEIKVLPITEIVSDNDFFDYEAKYEGKSQEITPARISDELTQKVGETAKRAYEVLKMKGFSRSEFIIVDNEPYMLEMNTIPGLTTESLIPQQAKAAGISLEDLFTNAIELSLA</sequence>
<evidence type="ECO:0000250" key="1"/>
<evidence type="ECO:0000255" key="2">
    <source>
        <dbReference type="HAMAP-Rule" id="MF_00047"/>
    </source>
</evidence>